<comment type="function">
    <text evidence="1">Acts as a processive, ATP-dependent zinc metallopeptidase for both cytoplasmic and membrane proteins. Plays a role in the quality control of integral membrane proteins (By similarity).</text>
</comment>
<comment type="function">
    <text evidence="5 7">Plays a role in the selective replacement of photosystem II (PSII) protein D1 in the PSII repair cycle following visible-light and UV-B induced damage. If damaged D1 is not removed then new D1 cannot be inserted to restore the PSII reaction center. Seems to also degrade damaged and/or unassembled PSII proteins D2 and PsbB (CP47). May recognize D1 via its first 20 amino acids, as deletion of these prevents the PSII repair cycle. Also seems to degrade cytoplasmic GGPS, glucosylglycerol-phosphate synthase.</text>
</comment>
<comment type="cofactor">
    <cofactor evidence="1">
        <name>Zn(2+)</name>
        <dbReference type="ChEBI" id="CHEBI:29105"/>
    </cofactor>
    <text evidence="1">Binds 1 zinc ion per subunit.</text>
</comment>
<comment type="subunit">
    <text evidence="5 9 10">Homohexamer (Potential). Part of a large (&gt;500 kDa) complex that includes FtsH3 and PSII. Coimmunoprecipitates with YidC (PubMed:30061392).</text>
</comment>
<comment type="subcellular location">
    <subcellularLocation>
        <location evidence="4 5">Cellular thylakoid membrane</location>
        <topology evidence="4 5">Multi-pass membrane protein</topology>
        <orientation evidence="4 5">Stromal side</orientation>
    </subcellularLocation>
    <text>A fraction is found associated with PSII. Localization to the cell inner membrane has been specifically tested and not seen.</text>
</comment>
<comment type="induction">
    <text evidence="7 8">By UV-B light and oxidative stress provided by methyl viologen.</text>
</comment>
<comment type="disruption phenotype">
    <text evidence="3 6">Cells have decreased chlorophyll content, with a 60% reduction in the content of photosystem I (PSI). The PSI that remains may have an altered structure. Cells grow normally under very low light (10 umol photons/m(2)/s) but are dramatically inhibited by low light at 40 umol photons/m(2)/s. Under this light intensity they also photobleach. Reduced rates of D1 processing and degradation are observed. Mutants show increased tolerance for non-ionic stress by maltose but also an increased sensitivity to high NaCl concentrations.</text>
</comment>
<comment type="similarity">
    <text evidence="10">In the central section; belongs to the AAA ATPase family.</text>
</comment>
<comment type="similarity">
    <text evidence="10">In the C-terminal section; belongs to the peptidase M41 family.</text>
</comment>
<keyword id="KW-0067">ATP-binding</keyword>
<keyword id="KW-0903">Direct protein sequencing</keyword>
<keyword id="KW-0378">Hydrolase</keyword>
<keyword id="KW-0472">Membrane</keyword>
<keyword id="KW-0479">Metal-binding</keyword>
<keyword id="KW-0482">Metalloprotease</keyword>
<keyword id="KW-0547">Nucleotide-binding</keyword>
<keyword id="KW-0645">Protease</keyword>
<keyword id="KW-1185">Reference proteome</keyword>
<keyword id="KW-0793">Thylakoid</keyword>
<keyword id="KW-0812">Transmembrane</keyword>
<keyword id="KW-1133">Transmembrane helix</keyword>
<keyword id="KW-0862">Zinc</keyword>
<name>FTSH2_SYNY3</name>
<gene>
    <name type="primary">ftsH2</name>
    <name type="ordered locus">slr0228</name>
</gene>
<protein>
    <recommendedName>
        <fullName>ATP-dependent zinc metalloprotease FtsH 2</fullName>
        <ecNumber>3.4.24.-</ecNumber>
    </recommendedName>
</protein>
<accession>Q55700</accession>
<evidence type="ECO:0000250" key="1"/>
<evidence type="ECO:0000255" key="2"/>
<evidence type="ECO:0000269" key="3">
    <source>
    </source>
</evidence>
<evidence type="ECO:0000269" key="4">
    <source>
    </source>
</evidence>
<evidence type="ECO:0000269" key="5">
    <source>
    </source>
</evidence>
<evidence type="ECO:0000269" key="6">
    <source>
    </source>
</evidence>
<evidence type="ECO:0000269" key="7">
    <source>
    </source>
</evidence>
<evidence type="ECO:0000269" key="8">
    <source>
    </source>
</evidence>
<evidence type="ECO:0000269" key="9">
    <source>
    </source>
</evidence>
<evidence type="ECO:0000305" key="10"/>
<dbReference type="EC" id="3.4.24.-"/>
<dbReference type="EMBL" id="BA000022">
    <property type="protein sequence ID" value="BAA10230.1"/>
    <property type="molecule type" value="Genomic_DNA"/>
</dbReference>
<dbReference type="PIR" id="S76378">
    <property type="entry name" value="S76378"/>
</dbReference>
<dbReference type="SMR" id="Q55700"/>
<dbReference type="FunCoup" id="Q55700">
    <property type="interactions" value="484"/>
</dbReference>
<dbReference type="IntAct" id="Q55700">
    <property type="interactions" value="2"/>
</dbReference>
<dbReference type="STRING" id="1148.gene:10499729"/>
<dbReference type="MEROPS" id="M41.017"/>
<dbReference type="PaxDb" id="1148-1001602"/>
<dbReference type="EnsemblBacteria" id="BAA10230">
    <property type="protein sequence ID" value="BAA10230"/>
    <property type="gene ID" value="BAA10230"/>
</dbReference>
<dbReference type="KEGG" id="syn:slr0228"/>
<dbReference type="eggNOG" id="COG0465">
    <property type="taxonomic scope" value="Bacteria"/>
</dbReference>
<dbReference type="InParanoid" id="Q55700"/>
<dbReference type="PhylomeDB" id="Q55700"/>
<dbReference type="BRENDA" id="3.4.24.B20">
    <property type="organism ID" value="382"/>
</dbReference>
<dbReference type="Proteomes" id="UP000001425">
    <property type="component" value="Chromosome"/>
</dbReference>
<dbReference type="GO" id="GO:0042651">
    <property type="term" value="C:thylakoid membrane"/>
    <property type="evidence" value="ECO:0000314"/>
    <property type="project" value="UniProtKB"/>
</dbReference>
<dbReference type="GO" id="GO:0005524">
    <property type="term" value="F:ATP binding"/>
    <property type="evidence" value="ECO:0007669"/>
    <property type="project" value="UniProtKB-UniRule"/>
</dbReference>
<dbReference type="GO" id="GO:0016887">
    <property type="term" value="F:ATP hydrolysis activity"/>
    <property type="evidence" value="ECO:0007669"/>
    <property type="project" value="UniProtKB-UniRule"/>
</dbReference>
<dbReference type="GO" id="GO:0004176">
    <property type="term" value="F:ATP-dependent peptidase activity"/>
    <property type="evidence" value="ECO:0000318"/>
    <property type="project" value="GO_Central"/>
</dbReference>
<dbReference type="GO" id="GO:0004222">
    <property type="term" value="F:metalloendopeptidase activity"/>
    <property type="evidence" value="ECO:0007669"/>
    <property type="project" value="InterPro"/>
</dbReference>
<dbReference type="GO" id="GO:0008270">
    <property type="term" value="F:zinc ion binding"/>
    <property type="evidence" value="ECO:0007669"/>
    <property type="project" value="UniProtKB-UniRule"/>
</dbReference>
<dbReference type="GO" id="GO:0010206">
    <property type="term" value="P:photosystem II repair"/>
    <property type="evidence" value="ECO:0000315"/>
    <property type="project" value="UniProtKB"/>
</dbReference>
<dbReference type="GO" id="GO:0030163">
    <property type="term" value="P:protein catabolic process"/>
    <property type="evidence" value="ECO:0007669"/>
    <property type="project" value="UniProtKB-UniRule"/>
</dbReference>
<dbReference type="GO" id="GO:0006508">
    <property type="term" value="P:proteolysis"/>
    <property type="evidence" value="ECO:0000318"/>
    <property type="project" value="GO_Central"/>
</dbReference>
<dbReference type="CDD" id="cd19501">
    <property type="entry name" value="RecA-like_FtsH"/>
    <property type="match status" value="1"/>
</dbReference>
<dbReference type="FunFam" id="1.10.8.60:FF:000001">
    <property type="entry name" value="ATP-dependent zinc metalloprotease FtsH"/>
    <property type="match status" value="1"/>
</dbReference>
<dbReference type="FunFam" id="1.20.58.760:FF:000001">
    <property type="entry name" value="ATP-dependent zinc metalloprotease FtsH"/>
    <property type="match status" value="1"/>
</dbReference>
<dbReference type="FunFam" id="3.40.50.300:FF:000001">
    <property type="entry name" value="ATP-dependent zinc metalloprotease FtsH"/>
    <property type="match status" value="1"/>
</dbReference>
<dbReference type="Gene3D" id="1.10.8.60">
    <property type="match status" value="1"/>
</dbReference>
<dbReference type="Gene3D" id="3.30.720.210">
    <property type="match status" value="1"/>
</dbReference>
<dbReference type="Gene3D" id="3.40.50.300">
    <property type="entry name" value="P-loop containing nucleotide triphosphate hydrolases"/>
    <property type="match status" value="1"/>
</dbReference>
<dbReference type="Gene3D" id="1.20.58.760">
    <property type="entry name" value="Peptidase M41"/>
    <property type="match status" value="1"/>
</dbReference>
<dbReference type="HAMAP" id="MF_01458">
    <property type="entry name" value="FtsH"/>
    <property type="match status" value="1"/>
</dbReference>
<dbReference type="InterPro" id="IPR003593">
    <property type="entry name" value="AAA+_ATPase"/>
</dbReference>
<dbReference type="InterPro" id="IPR041569">
    <property type="entry name" value="AAA_lid_3"/>
</dbReference>
<dbReference type="InterPro" id="IPR003959">
    <property type="entry name" value="ATPase_AAA_core"/>
</dbReference>
<dbReference type="InterPro" id="IPR003960">
    <property type="entry name" value="ATPase_AAA_CS"/>
</dbReference>
<dbReference type="InterPro" id="IPR005936">
    <property type="entry name" value="FtsH"/>
</dbReference>
<dbReference type="InterPro" id="IPR027417">
    <property type="entry name" value="P-loop_NTPase"/>
</dbReference>
<dbReference type="InterPro" id="IPR011546">
    <property type="entry name" value="Pept_M41_FtsH_extracell"/>
</dbReference>
<dbReference type="InterPro" id="IPR000642">
    <property type="entry name" value="Peptidase_M41"/>
</dbReference>
<dbReference type="InterPro" id="IPR037219">
    <property type="entry name" value="Peptidase_M41-like"/>
</dbReference>
<dbReference type="NCBIfam" id="TIGR01241">
    <property type="entry name" value="FtsH_fam"/>
    <property type="match status" value="1"/>
</dbReference>
<dbReference type="PANTHER" id="PTHR23076:SF139">
    <property type="entry name" value="ATP-DEPENDENT ZINC METALLOPROTEASE FTSH 2, CHLOROPLASTIC"/>
    <property type="match status" value="1"/>
</dbReference>
<dbReference type="PANTHER" id="PTHR23076">
    <property type="entry name" value="METALLOPROTEASE M41 FTSH"/>
    <property type="match status" value="1"/>
</dbReference>
<dbReference type="Pfam" id="PF00004">
    <property type="entry name" value="AAA"/>
    <property type="match status" value="1"/>
</dbReference>
<dbReference type="Pfam" id="PF17862">
    <property type="entry name" value="AAA_lid_3"/>
    <property type="match status" value="1"/>
</dbReference>
<dbReference type="Pfam" id="PF06480">
    <property type="entry name" value="FtsH_ext"/>
    <property type="match status" value="1"/>
</dbReference>
<dbReference type="Pfam" id="PF01434">
    <property type="entry name" value="Peptidase_M41"/>
    <property type="match status" value="1"/>
</dbReference>
<dbReference type="SMART" id="SM00382">
    <property type="entry name" value="AAA"/>
    <property type="match status" value="1"/>
</dbReference>
<dbReference type="SUPFAM" id="SSF140990">
    <property type="entry name" value="FtsH protease domain-like"/>
    <property type="match status" value="1"/>
</dbReference>
<dbReference type="SUPFAM" id="SSF52540">
    <property type="entry name" value="P-loop containing nucleoside triphosphate hydrolases"/>
    <property type="match status" value="1"/>
</dbReference>
<dbReference type="PROSITE" id="PS00674">
    <property type="entry name" value="AAA"/>
    <property type="match status" value="1"/>
</dbReference>
<proteinExistence type="evidence at protein level"/>
<organism>
    <name type="scientific">Synechocystis sp. (strain ATCC 27184 / PCC 6803 / Kazusa)</name>
    <dbReference type="NCBI Taxonomy" id="1111708"/>
    <lineage>
        <taxon>Bacteria</taxon>
        <taxon>Bacillati</taxon>
        <taxon>Cyanobacteriota</taxon>
        <taxon>Cyanophyceae</taxon>
        <taxon>Synechococcales</taxon>
        <taxon>Merismopediaceae</taxon>
        <taxon>Synechocystis</taxon>
    </lineage>
</organism>
<feature type="chain" id="PRO_0000084652" description="ATP-dependent zinc metalloprotease FtsH 2">
    <location>
        <begin position="1"/>
        <end position="627"/>
    </location>
</feature>
<feature type="topological domain" description="Cytoplasmic" evidence="2">
    <location>
        <begin position="1"/>
        <end position="7"/>
    </location>
</feature>
<feature type="transmembrane region" description="Helical" evidence="2">
    <location>
        <begin position="8"/>
        <end position="28"/>
    </location>
</feature>
<feature type="topological domain" description="Lumenal" evidence="2">
    <location>
        <begin position="29"/>
        <end position="117"/>
    </location>
</feature>
<feature type="transmembrane region" description="Helical" evidence="2">
    <location>
        <begin position="118"/>
        <end position="138"/>
    </location>
</feature>
<feature type="topological domain" description="Cytoplasmic" evidence="2">
    <location>
        <begin position="139"/>
        <end position="627"/>
    </location>
</feature>
<feature type="active site" evidence="1">
    <location>
        <position position="434"/>
    </location>
</feature>
<feature type="binding site" evidence="2">
    <location>
        <begin position="212"/>
        <end position="219"/>
    </location>
    <ligand>
        <name>ATP</name>
        <dbReference type="ChEBI" id="CHEBI:30616"/>
    </ligand>
</feature>
<feature type="binding site" evidence="1">
    <location>
        <position position="433"/>
    </location>
    <ligand>
        <name>Zn(2+)</name>
        <dbReference type="ChEBI" id="CHEBI:29105"/>
        <note>catalytic</note>
    </ligand>
</feature>
<feature type="binding site" evidence="1">
    <location>
        <position position="437"/>
    </location>
    <ligand>
        <name>Zn(2+)</name>
        <dbReference type="ChEBI" id="CHEBI:29105"/>
        <note>catalytic</note>
    </ligand>
</feature>
<feature type="binding site" evidence="1">
    <location>
        <position position="511"/>
    </location>
    <ligand>
        <name>Zn(2+)</name>
        <dbReference type="ChEBI" id="CHEBI:29105"/>
        <note>catalytic</note>
    </ligand>
</feature>
<sequence>MKFSWRTALLWSLPLLVVGFFFWQGSFGGADANLGSNTANTRMTYGRFLEYVDAGRITSVDLYENGRTAIVQVSDPEVDRTLRSRVDLPTNAPELIARLRDSNIRLDSHPVRNNGMVWGFVGNLIFPVLLIASLFFLFRRSSNMPGGPGQAMNFGKSKARFQMDAKTGVMFDDVAGIDEAKEELQEVVTFLKQPERFTAVGAKIPKGVLLVGPPGTGKTLLAKAIAGEAGVPFFSISGSEFVEMFVGVGASRVRDLFKKAKENAPCLIFIDEIDAVGRQRGAGIGGGNDEREQTLNQLLTEMDGFEGNTGIIIIAATNRPDVLDSALMRPGRFDRQVMVDAPDYSGRKEILEVHARNKKLAPEVSIDSIARRTPGFSGADLANLLNEAAILTARRRKSAITLLEIDDAVDRVVAGMEGTPLVDSKSKRLIAYHEVGHAIVGTLLKDHDPVQKVTLIPRGQAQGLTWFTPNEEQGLTTKAQLMARIAGAMGGRAAEEEVFGDDEVTTGAGGDLQQVTEMARQMVTRFGMSNLGPISLESSGGEVFLGGGLMNRSEYSEEVATRIDAQVRQLAEQGHQMARKIVQEQREVVDRLVDLLIEKETIDGEEFRQIVAEYAEVPVKEQLIPQL</sequence>
<reference key="1">
    <citation type="journal article" date="1995" name="DNA Res.">
        <title>Sequence analysis of the genome of the unicellular cyanobacterium Synechocystis sp. strain PCC6803. I. Sequence features in the 1 Mb region from map positions 64% to 92% of the genome.</title>
        <authorList>
            <person name="Kaneko T."/>
            <person name="Tanaka A."/>
            <person name="Sato S."/>
            <person name="Kotani H."/>
            <person name="Sazuka T."/>
            <person name="Miyajima N."/>
            <person name="Sugiura M."/>
            <person name="Tabata S."/>
        </authorList>
    </citation>
    <scope>NUCLEOTIDE SEQUENCE [LARGE SCALE GENOMIC DNA]</scope>
    <source>
        <strain>ATCC 27184 / PCC 6803 / N-1</strain>
    </source>
</reference>
<reference key="2">
    <citation type="journal article" date="1996" name="DNA Res.">
        <title>Sequence analysis of the genome of the unicellular cyanobacterium Synechocystis sp. strain PCC6803. II. Sequence determination of the entire genome and assignment of potential protein-coding regions.</title>
        <authorList>
            <person name="Kaneko T."/>
            <person name="Sato S."/>
            <person name="Kotani H."/>
            <person name="Tanaka A."/>
            <person name="Asamizu E."/>
            <person name="Nakamura Y."/>
            <person name="Miyajima N."/>
            <person name="Hirosawa M."/>
            <person name="Sugiura M."/>
            <person name="Sasamoto S."/>
            <person name="Kimura T."/>
            <person name="Hosouchi T."/>
            <person name="Matsuno A."/>
            <person name="Muraki A."/>
            <person name="Nakazaki N."/>
            <person name="Naruo K."/>
            <person name="Okumura S."/>
            <person name="Shimpo S."/>
            <person name="Takeuchi C."/>
            <person name="Wada T."/>
            <person name="Watanabe A."/>
            <person name="Yamada M."/>
            <person name="Yasuda M."/>
            <person name="Tabata S."/>
        </authorList>
    </citation>
    <scope>NUCLEOTIDE SEQUENCE [LARGE SCALE GENOMIC DNA]</scope>
    <source>
        <strain>ATCC 27184 / PCC 6803 / Kazusa</strain>
    </source>
</reference>
<reference key="3">
    <citation type="journal article" date="2002" name="Biochemistry">
        <title>Proteomic analysis of a highly active photosystem II preparation from the cyanobacterium Synechocystis sp. PCC 6803 reveals the presence of novel polypeptides.</title>
        <authorList>
            <person name="Kashino Y."/>
            <person name="Lauber W.M."/>
            <person name="Carroll J.A."/>
            <person name="Wang Q."/>
            <person name="Whitmarsh J."/>
            <person name="Satoh K."/>
            <person name="Pakrasi H.B."/>
        </authorList>
    </citation>
    <scope>PROTEIN SEQUENCE OF 1-14</scope>
    <scope>SUBCELLULAR LOCATION</scope>
    <scope>IDENTIFICATION BY MASS SPECTROMETRY</scope>
</reference>
<reference key="4">
    <citation type="journal article" date="2000" name="FEBS Lett.">
        <title>Involvement of an FtsH homologue in the assembly of functional photosystem I in the cyanobacterium Synechocystis sp. PCC 6803.</title>
        <authorList>
            <person name="Mann N.H."/>
            <person name="Novac N."/>
            <person name="Mullineaux C.W."/>
            <person name="Newman J."/>
            <person name="Bailey S."/>
            <person name="Robinson C."/>
        </authorList>
    </citation>
    <scope>DISRUPTION PHENOTYPE</scope>
</reference>
<reference key="5">
    <citation type="journal article" date="2003" name="Plant Cell">
        <title>FtsH is involved in the early stages of repair of photosystem II in Synechocystis sp PCC 6803.</title>
        <authorList>
            <person name="Silva P."/>
            <person name="Thompson E."/>
            <person name="Bailey S."/>
            <person name="Kruse O."/>
            <person name="Mullineaux C.W."/>
            <person name="Robinson C."/>
            <person name="Mann N.H."/>
            <person name="Nixon P.J."/>
        </authorList>
    </citation>
    <scope>FUNCTION IN PSII REPAIR AND D1 TURNOVER</scope>
    <scope>SUBUNIT</scope>
    <scope>SUBCELLULAR LOCATION</scope>
</reference>
<reference key="6">
    <citation type="journal article" date="2006" name="J. Biol. Chem.">
        <title>The FtsH protease slr0228 is important for quality control of photosystem II in the thylakoid membrane of Synechocystis sp. PCC 6803.</title>
        <authorList>
            <person name="Komenda J."/>
            <person name="Barker M."/>
            <person name="Kuvikova S."/>
            <person name="de Vries R."/>
            <person name="Mullineaux C.W."/>
            <person name="Tichy M."/>
            <person name="Nixon P.J."/>
        </authorList>
    </citation>
    <scope>PSBB (CP47) AND D2 AS SUBSTRATES</scope>
    <scope>LACK OF LOCALIZATION TO THE CELL INNER MEMBRANE</scope>
</reference>
<reference key="7">
    <citation type="journal article" date="2007" name="Biochim. Biophys. Acta">
        <title>The role of the FtsH and Deg proteases in the repair of UV-B radiation-damaged Photosystem II in the cyanobacterium Synechocystis PCC 6803.</title>
        <authorList>
            <person name="Cheregi O."/>
            <person name="Sicora C."/>
            <person name="Kos P.B."/>
            <person name="Barker M."/>
            <person name="Nixon P.J."/>
            <person name="Vass I."/>
        </authorList>
    </citation>
    <scope>ROLE IN REPAIR FOLLOWING UV-B INDUCED DAMAGE</scope>
    <scope>D2 AS SUBSTRATE</scope>
    <scope>INDUCTION</scope>
</reference>
<reference key="8">
    <citation type="journal article" date="2007" name="Mol. Microbiol.">
        <title>A membrane-bound FtsH protease is involved in osmoregulation in Synechocystis sp. PCC 6803: the compatible solute synthesizing enzyme GgpS is one of the targets for proteolysis.</title>
        <authorList>
            <person name="Stirnberg M."/>
            <person name="Fulda S."/>
            <person name="Huckauf J."/>
            <person name="Hagemann M."/>
            <person name="Kramer R."/>
            <person name="Marin K."/>
        </authorList>
    </citation>
    <scope>GGPS AS SUBSTRATE</scope>
    <scope>DISRUPTION PHENOTYPE</scope>
</reference>
<reference key="9">
    <citation type="journal article" date="2007" name="Mol. Microbiol.">
        <title>FtsH protease is required for induction of inorganic carbon acquisition complexes in Synechocystis sp. PCC 6803.</title>
        <authorList>
            <person name="Zhang P."/>
            <person name="Sicora C.I."/>
            <person name="Vorontsova N."/>
            <person name="Allahverdiyeva Y."/>
            <person name="Battchikova N."/>
            <person name="Nixon P.J."/>
            <person name="Aro E.M."/>
        </authorList>
    </citation>
    <scope>INTERACTION WITH FTSH3 AND PSII</scope>
    <scope>INDUCTION BY OXIDATIVE STRESS</scope>
</reference>
<reference key="10">
    <citation type="journal article" date="2007" name="Plant Cell">
        <title>The exposed N-terminal tail of the D1 subunit is required for rapid D1 degradation during photosystem II repair in Synechocystis sp PCC 6803.</title>
        <authorList>
            <person name="Komenda J."/>
            <person name="Tichy M."/>
            <person name="Prasil O."/>
            <person name="Knoppova J."/>
            <person name="Kuvikova S."/>
            <person name="de Vries R."/>
            <person name="Nixon P.J."/>
        </authorList>
    </citation>
    <scope>POSSIBLE MECHANISM OF SUBSTRATE RECOGNITION</scope>
</reference>
<reference key="11">
    <citation type="journal article" date="2018" name="Proc. Natl. Acad. Sci. U.S.A.">
        <title>Ycf48 involved in the biogenesis of the oxygen-evolving photosystem II complex is a seven-bladed beta-propeller protein.</title>
        <authorList>
            <person name="Yu J."/>
            <person name="Knoppova J."/>
            <person name="Michoux F."/>
            <person name="Bialek W."/>
            <person name="Cota E."/>
            <person name="Shukla M.K."/>
            <person name="Straskova A."/>
            <person name="Pascual Aznar G."/>
            <person name="Sobotka R."/>
            <person name="Komenda J."/>
            <person name="Murray J.W."/>
            <person name="Nixon P.J."/>
        </authorList>
    </citation>
    <scope>INTERACTION WITH YIDC</scope>
    <scope>SUBUNIT</scope>
    <source>
        <strain>ATCC 27184 / PCC 6803 / Kazusa</strain>
    </source>
</reference>
<reference key="12">
    <citation type="journal article" date="2010" name="Ann. Bot.">
        <title>Recent advances in understanding the assembly and repair of photosystem II.</title>
        <authorList>
            <person name="Nixon P.J."/>
            <person name="Michoux F."/>
            <person name="Yu J."/>
            <person name="Boehm M."/>
            <person name="Komenda J."/>
        </authorList>
    </citation>
    <scope>REVIEW</scope>
</reference>